<comment type="function">
    <text evidence="3">Involved in biosynthesis of di-myo-inositol phosphate (DIP), a widespread organic solute in microorganisms adapted to hot environments. Catalyzes the condensation of CTP and L-myo-inositol-1-phosphate into CDP-L-myo-inositol, as well as the biosynthesis of di-myo-inositol-1,3'-phosphate-1'-phosphate (DIPP) from CDP-L-myo-inositol and L-myo-inositol-1-phosphate.</text>
</comment>
<comment type="catalytic activity">
    <reaction evidence="3">
        <text>1D-myo-inositol 3-phosphate + CTP + H(+) = CDP-1L-myo-inositol + diphosphate</text>
        <dbReference type="Rhea" id="RHEA:30647"/>
        <dbReference type="ChEBI" id="CHEBI:15378"/>
        <dbReference type="ChEBI" id="CHEBI:33019"/>
        <dbReference type="ChEBI" id="CHEBI:37563"/>
        <dbReference type="ChEBI" id="CHEBI:58401"/>
        <dbReference type="ChEBI" id="CHEBI:62573"/>
        <dbReference type="EC" id="2.7.7.74"/>
    </reaction>
</comment>
<comment type="catalytic activity">
    <reaction evidence="3">
        <text>CDP-1L-myo-inositol + 1D-myo-inositol 3-phosphate = bis(1L-myo-inositol) 3,1'-phosphate 1-phosphate + CMP + H(+)</text>
        <dbReference type="Rhea" id="RHEA:31327"/>
        <dbReference type="ChEBI" id="CHEBI:15378"/>
        <dbReference type="ChEBI" id="CHEBI:58401"/>
        <dbReference type="ChEBI" id="CHEBI:60377"/>
        <dbReference type="ChEBI" id="CHEBI:62573"/>
        <dbReference type="ChEBI" id="CHEBI:62576"/>
        <dbReference type="EC" id="2.7.8.34"/>
    </reaction>
</comment>
<comment type="cofactor">
    <cofactor evidence="1">
        <name>Mg(2+)</name>
        <dbReference type="ChEBI" id="CHEBI:18420"/>
    </cofactor>
</comment>
<comment type="subcellular location">
    <subcellularLocation>
        <location evidence="4">Membrane</location>
        <topology evidence="4">Multi-pass membrane protein</topology>
    </subcellularLocation>
</comment>
<comment type="similarity">
    <text evidence="4">In the N-terminal section; belongs to the MobA family.</text>
</comment>
<comment type="similarity">
    <text evidence="4">In the C-terminal section; belongs to the CDP-alcohol phosphatidyltransferase class-I family.</text>
</comment>
<feature type="chain" id="PRO_0000424333" description="Bifunctional IPC transferase and DIPP synthase">
    <location>
        <begin position="1"/>
        <end position="428"/>
    </location>
</feature>
<feature type="transmembrane region" description="Helical" evidence="2">
    <location>
        <begin position="266"/>
        <end position="286"/>
    </location>
</feature>
<feature type="transmembrane region" description="Helical" evidence="2">
    <location>
        <begin position="336"/>
        <end position="356"/>
    </location>
</feature>
<feature type="transmembrane region" description="Helical" evidence="2">
    <location>
        <begin position="389"/>
        <end position="409"/>
    </location>
</feature>
<feature type="region of interest" description="MobA-like NTP transferase" evidence="1">
    <location>
        <begin position="2"/>
        <end position="227"/>
    </location>
</feature>
<feature type="region of interest" description="CDP-alcohol phosphatidyltransferases" evidence="1">
    <location>
        <begin position="228"/>
        <end position="425"/>
    </location>
</feature>
<feature type="binding site" evidence="1">
    <location>
        <begin position="8"/>
        <end position="10"/>
    </location>
    <ligand>
        <name>CTP</name>
        <dbReference type="ChEBI" id="CHEBI:37563"/>
    </ligand>
</feature>
<feature type="binding site" evidence="1">
    <location>
        <position position="25"/>
    </location>
    <ligand>
        <name>CTP</name>
        <dbReference type="ChEBI" id="CHEBI:37563"/>
    </ligand>
</feature>
<feature type="binding site" evidence="1">
    <location>
        <position position="80"/>
    </location>
    <ligand>
        <name>CTP</name>
        <dbReference type="ChEBI" id="CHEBI:37563"/>
    </ligand>
</feature>
<feature type="binding site" evidence="1">
    <location>
        <position position="116"/>
    </location>
    <ligand>
        <name>CTP</name>
        <dbReference type="ChEBI" id="CHEBI:37563"/>
    </ligand>
</feature>
<feature type="binding site" evidence="1">
    <location>
        <position position="116"/>
    </location>
    <ligand>
        <name>Mg(2+)</name>
        <dbReference type="ChEBI" id="CHEBI:18420"/>
    </ligand>
</feature>
<protein>
    <recommendedName>
        <fullName>Bifunctional IPC transferase and DIPP synthase</fullName>
    </recommendedName>
    <domain>
        <recommendedName>
            <fullName>1L-myo-inositol-1-phosphate cytidylyltransferase</fullName>
            <shortName>IPCT</shortName>
            <ecNumber>2.7.7.74</ecNumber>
        </recommendedName>
    </domain>
    <domain>
        <recommendedName>
            <fullName>CDP-L-myo-inositol myo-inositolphosphotransferase</fullName>
            <shortName>DIPP synthase</shortName>
            <ecNumber>2.7.8.34</ecNumber>
        </recommendedName>
        <alternativeName>
            <fullName>Di-myo-inositol-1,3'-phosphate-1'-phosphate synthase</fullName>
        </alternativeName>
    </domain>
</protein>
<dbReference type="EC" id="2.7.7.74"/>
<dbReference type="EC" id="2.7.8.34"/>
<dbReference type="EMBL" id="AE000657">
    <property type="protein sequence ID" value="AAC07344.1"/>
    <property type="molecule type" value="Genomic_DNA"/>
</dbReference>
<dbReference type="PIR" id="H70418">
    <property type="entry name" value="H70418"/>
</dbReference>
<dbReference type="RefSeq" id="NP_213943.1">
    <property type="nucleotide sequence ID" value="NC_000918.1"/>
</dbReference>
<dbReference type="RefSeq" id="WP_010880881.1">
    <property type="nucleotide sequence ID" value="NC_000918.1"/>
</dbReference>
<dbReference type="SMR" id="O67379"/>
<dbReference type="STRING" id="224324.aq_1367"/>
<dbReference type="EnsemblBacteria" id="AAC07344">
    <property type="protein sequence ID" value="AAC07344"/>
    <property type="gene ID" value="aq_1367"/>
</dbReference>
<dbReference type="KEGG" id="aae:aq_1367"/>
<dbReference type="PATRIC" id="fig|224324.8.peg.1070"/>
<dbReference type="eggNOG" id="COG0558">
    <property type="taxonomic scope" value="Bacteria"/>
</dbReference>
<dbReference type="eggNOG" id="COG1213">
    <property type="taxonomic scope" value="Bacteria"/>
</dbReference>
<dbReference type="HOGENOM" id="CLU_643435_0_0_0"/>
<dbReference type="InParanoid" id="O67379"/>
<dbReference type="OrthoDB" id="9803871at2"/>
<dbReference type="BioCyc" id="MetaCyc:MONOMER-124307"/>
<dbReference type="BRENDA" id="2.7.7.74">
    <property type="organism ID" value="396"/>
</dbReference>
<dbReference type="BRENDA" id="2.7.8.34">
    <property type="organism ID" value="396"/>
</dbReference>
<dbReference type="Proteomes" id="UP000000798">
    <property type="component" value="Chromosome"/>
</dbReference>
<dbReference type="GO" id="GO:0016020">
    <property type="term" value="C:membrane"/>
    <property type="evidence" value="ECO:0007669"/>
    <property type="project" value="UniProtKB-SubCell"/>
</dbReference>
<dbReference type="GO" id="GO:0046872">
    <property type="term" value="F:metal ion binding"/>
    <property type="evidence" value="ECO:0007669"/>
    <property type="project" value="UniProtKB-KW"/>
</dbReference>
<dbReference type="GO" id="GO:0016779">
    <property type="term" value="F:nucleotidyltransferase activity"/>
    <property type="evidence" value="ECO:0000314"/>
    <property type="project" value="UniProtKB"/>
</dbReference>
<dbReference type="GO" id="GO:0016780">
    <property type="term" value="F:phosphotransferase activity, for other substituted phosphate groups"/>
    <property type="evidence" value="ECO:0000314"/>
    <property type="project" value="UniProtKB"/>
</dbReference>
<dbReference type="GO" id="GO:0008654">
    <property type="term" value="P:phospholipid biosynthetic process"/>
    <property type="evidence" value="ECO:0007669"/>
    <property type="project" value="InterPro"/>
</dbReference>
<dbReference type="FunFam" id="1.20.120.1760:FF:000042">
    <property type="entry name" value="Bifunctional IPC transferase and DIPP synthase"/>
    <property type="match status" value="1"/>
</dbReference>
<dbReference type="FunFam" id="3.90.550.10:FF:000282">
    <property type="entry name" value="Bifunctional IPC transferase and DIPP synthase"/>
    <property type="match status" value="1"/>
</dbReference>
<dbReference type="Gene3D" id="1.20.120.1760">
    <property type="match status" value="1"/>
</dbReference>
<dbReference type="Gene3D" id="3.90.550.10">
    <property type="entry name" value="Spore Coat Polysaccharide Biosynthesis Protein SpsA, Chain A"/>
    <property type="match status" value="1"/>
</dbReference>
<dbReference type="InterPro" id="IPR000462">
    <property type="entry name" value="CDP-OH_P_trans"/>
</dbReference>
<dbReference type="InterPro" id="IPR043130">
    <property type="entry name" value="CDP-OH_PTrfase_TM_dom"/>
</dbReference>
<dbReference type="InterPro" id="IPR048254">
    <property type="entry name" value="CDP_ALCOHOL_P_TRANSF_CS"/>
</dbReference>
<dbReference type="InterPro" id="IPR053433">
    <property type="entry name" value="IPC_transferase/DIPP_synth"/>
</dbReference>
<dbReference type="InterPro" id="IPR005835">
    <property type="entry name" value="NTP_transferase_dom"/>
</dbReference>
<dbReference type="InterPro" id="IPR029044">
    <property type="entry name" value="Nucleotide-diphossugar_trans"/>
</dbReference>
<dbReference type="NCBIfam" id="NF041135">
    <property type="entry name" value="IPPtranDIPPsyn_Thcocales"/>
    <property type="match status" value="1"/>
</dbReference>
<dbReference type="PANTHER" id="PTHR19136:SF84">
    <property type="entry name" value="BIFUNCTIONAL IPC TRANSFERASE AND DIPP SYNTHASE"/>
    <property type="match status" value="1"/>
</dbReference>
<dbReference type="PANTHER" id="PTHR19136">
    <property type="entry name" value="MOLYBDENUM COFACTOR GUANYLYLTRANSFERASE"/>
    <property type="match status" value="1"/>
</dbReference>
<dbReference type="Pfam" id="PF01066">
    <property type="entry name" value="CDP-OH_P_transf"/>
    <property type="match status" value="1"/>
</dbReference>
<dbReference type="Pfam" id="PF00483">
    <property type="entry name" value="NTP_transferase"/>
    <property type="match status" value="1"/>
</dbReference>
<dbReference type="SUPFAM" id="SSF53448">
    <property type="entry name" value="Nucleotide-diphospho-sugar transferases"/>
    <property type="match status" value="1"/>
</dbReference>
<dbReference type="PROSITE" id="PS00379">
    <property type="entry name" value="CDP_ALCOHOL_P_TRANSF"/>
    <property type="match status" value="1"/>
</dbReference>
<evidence type="ECO:0000250" key="1"/>
<evidence type="ECO:0000255" key="2"/>
<evidence type="ECO:0000269" key="3">
    <source>
    </source>
</evidence>
<evidence type="ECO:0000305" key="4"/>
<name>DIPPS_AQUAE</name>
<accession>O67379</accession>
<keyword id="KW-0460">Magnesium</keyword>
<keyword id="KW-0472">Membrane</keyword>
<keyword id="KW-0479">Metal-binding</keyword>
<keyword id="KW-0511">Multifunctional enzyme</keyword>
<keyword id="KW-1185">Reference proteome</keyword>
<keyword id="KW-0808">Transferase</keyword>
<keyword id="KW-0812">Transmembrane</keyword>
<keyword id="KW-1133">Transmembrane helix</keyword>
<reference key="1">
    <citation type="journal article" date="1998" name="Nature">
        <title>The complete genome of the hyperthermophilic bacterium Aquifex aeolicus.</title>
        <authorList>
            <person name="Deckert G."/>
            <person name="Warren P.V."/>
            <person name="Gaasterland T."/>
            <person name="Young W.G."/>
            <person name="Lenox A.L."/>
            <person name="Graham D.E."/>
            <person name="Overbeek R."/>
            <person name="Snead M.A."/>
            <person name="Keller M."/>
            <person name="Aujay M."/>
            <person name="Huber R."/>
            <person name="Feldman R.A."/>
            <person name="Short J.M."/>
            <person name="Olsen G.J."/>
            <person name="Swanson R.V."/>
        </authorList>
    </citation>
    <scope>NUCLEOTIDE SEQUENCE [LARGE SCALE GENOMIC DNA]</scope>
    <source>
        <strain>VF5</strain>
    </source>
</reference>
<reference key="2">
    <citation type="journal article" date="2007" name="J. Bacteriol.">
        <title>Bifunctional CTP:inositol-1-phosphate cytidylyltransferase/CDP-inositol:inositol-1-phosphate transferase, the key enzyme for di-myo-inositol-phosphate synthesis in several (hyper)thermophiles.</title>
        <authorList>
            <person name="Rodrigues M.V."/>
            <person name="Borges N."/>
            <person name="Henriques M."/>
            <person name="Lamosa P."/>
            <person name="Ventura R."/>
            <person name="Fernandes C."/>
            <person name="Empadinhas N."/>
            <person name="Maycock C."/>
            <person name="da Costa M.S."/>
            <person name="Santos H."/>
        </authorList>
    </citation>
    <scope>FUNCTION</scope>
    <scope>CATALYTIC ACTIVITY</scope>
</reference>
<proteinExistence type="evidence at protein level"/>
<organism>
    <name type="scientific">Aquifex aeolicus (strain VF5)</name>
    <dbReference type="NCBI Taxonomy" id="224324"/>
    <lineage>
        <taxon>Bacteria</taxon>
        <taxon>Pseudomonadati</taxon>
        <taxon>Aquificota</taxon>
        <taxon>Aquificia</taxon>
        <taxon>Aquificales</taxon>
        <taxon>Aquificaceae</taxon>
        <taxon>Aquifex</taxon>
    </lineage>
</organism>
<sequence>MVETAVILAGGEGNRLKPLTEEVPKALLKVAGRELLYRTIKQLQDVGVKNFVIVVNKKFEGKVKAFLKEHNFEAEVIPNEHPEKENGYSLYLAKGRIKGEFAVVMSDHIYEKAFLEKAVEGKGLIVDRLGLYINKNEATKVKCEEGRIKYIGKNLEKYDGFDTGFFVLDESIFEVAEEALKEQKKLTMSELAKRAQIPCTEVSGYFWMDVDTPEDVEKAKKYLVKTAIKGVGDGFISRNLNRKVSTRISPYLVDKFTPNQLTVLTFLLGMFSALVAYFSPALGGILLQINSMLDGLDGEVARAQMRTTKFGAWLDSVLDRYVDFAFLSALAMHLKPSWDFMPWVFAALFGSVMVSYSTERYKGAYCEDAYAVIKELRYLLGKRDERIFMIMIFTILGWIKALFVVLAIITNLRVILTIYLVWKKKGNV</sequence>
<gene>
    <name type="primary">spsI</name>
    <name type="ordered locus">aq_1367</name>
</gene>